<feature type="chain" id="PRO_0000158475" description="Ribose-5-phosphate isomerase A">
    <location>
        <begin position="1"/>
        <end position="227"/>
    </location>
</feature>
<feature type="active site" description="Proton acceptor" evidence="1">
    <location>
        <position position="104"/>
    </location>
</feature>
<feature type="binding site" evidence="1">
    <location>
        <begin position="26"/>
        <end position="29"/>
    </location>
    <ligand>
        <name>substrate</name>
    </ligand>
</feature>
<feature type="binding site" evidence="1">
    <location>
        <begin position="82"/>
        <end position="85"/>
    </location>
    <ligand>
        <name>substrate</name>
    </ligand>
</feature>
<feature type="binding site" evidence="1">
    <location>
        <begin position="95"/>
        <end position="98"/>
    </location>
    <ligand>
        <name>substrate</name>
    </ligand>
</feature>
<feature type="binding site" evidence="1">
    <location>
        <position position="122"/>
    </location>
    <ligand>
        <name>substrate</name>
    </ligand>
</feature>
<name>RPIA_STRR6</name>
<evidence type="ECO:0000255" key="1">
    <source>
        <dbReference type="HAMAP-Rule" id="MF_00170"/>
    </source>
</evidence>
<evidence type="ECO:0000305" key="2"/>
<proteinExistence type="inferred from homology"/>
<keyword id="KW-0413">Isomerase</keyword>
<keyword id="KW-1185">Reference proteome</keyword>
<accession>Q8DQD1</accession>
<gene>
    <name evidence="1" type="primary">rpiA</name>
    <name type="ordered locus">spr0731</name>
</gene>
<reference key="1">
    <citation type="journal article" date="2001" name="J. Bacteriol.">
        <title>Genome of the bacterium Streptococcus pneumoniae strain R6.</title>
        <authorList>
            <person name="Hoskins J."/>
            <person name="Alborn W.E. Jr."/>
            <person name="Arnold J."/>
            <person name="Blaszczak L.C."/>
            <person name="Burgett S."/>
            <person name="DeHoff B.S."/>
            <person name="Estrem S.T."/>
            <person name="Fritz L."/>
            <person name="Fu D.-J."/>
            <person name="Fuller W."/>
            <person name="Geringer C."/>
            <person name="Gilmour R."/>
            <person name="Glass J.S."/>
            <person name="Khoja H."/>
            <person name="Kraft A.R."/>
            <person name="Lagace R.E."/>
            <person name="LeBlanc D.J."/>
            <person name="Lee L.N."/>
            <person name="Lefkowitz E.J."/>
            <person name="Lu J."/>
            <person name="Matsushima P."/>
            <person name="McAhren S.M."/>
            <person name="McHenney M."/>
            <person name="McLeaster K."/>
            <person name="Mundy C.W."/>
            <person name="Nicas T.I."/>
            <person name="Norris F.H."/>
            <person name="O'Gara M."/>
            <person name="Peery R.B."/>
            <person name="Robertson G.T."/>
            <person name="Rockey P."/>
            <person name="Sun P.-M."/>
            <person name="Winkler M.E."/>
            <person name="Yang Y."/>
            <person name="Young-Bellido M."/>
            <person name="Zhao G."/>
            <person name="Zook C.A."/>
            <person name="Baltz R.H."/>
            <person name="Jaskunas S.R."/>
            <person name="Rosteck P.R. Jr."/>
            <person name="Skatrud P.L."/>
            <person name="Glass J.I."/>
        </authorList>
    </citation>
    <scope>NUCLEOTIDE SEQUENCE [LARGE SCALE GENOMIC DNA]</scope>
    <source>
        <strain>ATCC BAA-255 / R6</strain>
    </source>
</reference>
<dbReference type="EC" id="5.3.1.6" evidence="1"/>
<dbReference type="EMBL" id="AE007317">
    <property type="protein sequence ID" value="AAK99535.1"/>
    <property type="status" value="ALT_INIT"/>
    <property type="molecule type" value="Genomic_DNA"/>
</dbReference>
<dbReference type="PIR" id="C97963">
    <property type="entry name" value="C97963"/>
</dbReference>
<dbReference type="RefSeq" id="NP_358325.1">
    <property type="nucleotide sequence ID" value="NC_003098.1"/>
</dbReference>
<dbReference type="RefSeq" id="WP_000429299.1">
    <property type="nucleotide sequence ID" value="NC_003098.1"/>
</dbReference>
<dbReference type="SMR" id="Q8DQD1"/>
<dbReference type="STRING" id="171101.spr0731"/>
<dbReference type="GeneID" id="45653812"/>
<dbReference type="KEGG" id="spr:spr0731"/>
<dbReference type="PATRIC" id="fig|171101.6.peg.810"/>
<dbReference type="eggNOG" id="COG0120">
    <property type="taxonomic scope" value="Bacteria"/>
</dbReference>
<dbReference type="HOGENOM" id="CLU_056590_1_0_9"/>
<dbReference type="UniPathway" id="UPA00115">
    <property type="reaction ID" value="UER00412"/>
</dbReference>
<dbReference type="Proteomes" id="UP000000586">
    <property type="component" value="Chromosome"/>
</dbReference>
<dbReference type="GO" id="GO:0004751">
    <property type="term" value="F:ribose-5-phosphate isomerase activity"/>
    <property type="evidence" value="ECO:0007669"/>
    <property type="project" value="UniProtKB-UniRule"/>
</dbReference>
<dbReference type="GO" id="GO:0009052">
    <property type="term" value="P:pentose-phosphate shunt, non-oxidative branch"/>
    <property type="evidence" value="ECO:0007669"/>
    <property type="project" value="UniProtKB-UniRule"/>
</dbReference>
<dbReference type="CDD" id="cd01398">
    <property type="entry name" value="RPI_A"/>
    <property type="match status" value="1"/>
</dbReference>
<dbReference type="FunFam" id="3.40.50.1360:FF:000001">
    <property type="entry name" value="Ribose-5-phosphate isomerase A"/>
    <property type="match status" value="1"/>
</dbReference>
<dbReference type="Gene3D" id="3.30.70.260">
    <property type="match status" value="1"/>
</dbReference>
<dbReference type="Gene3D" id="3.40.50.1360">
    <property type="match status" value="1"/>
</dbReference>
<dbReference type="HAMAP" id="MF_00170">
    <property type="entry name" value="Rib_5P_isom_A"/>
    <property type="match status" value="1"/>
</dbReference>
<dbReference type="InterPro" id="IPR037171">
    <property type="entry name" value="NagB/RpiA_transferase-like"/>
</dbReference>
<dbReference type="InterPro" id="IPR050262">
    <property type="entry name" value="Ribose-5P_isomerase"/>
</dbReference>
<dbReference type="InterPro" id="IPR020672">
    <property type="entry name" value="Ribose5P_isomerase_typA_subgr"/>
</dbReference>
<dbReference type="InterPro" id="IPR004788">
    <property type="entry name" value="Ribose5P_isomerase_type_A"/>
</dbReference>
<dbReference type="NCBIfam" id="NF001924">
    <property type="entry name" value="PRK00702.1"/>
    <property type="match status" value="1"/>
</dbReference>
<dbReference type="NCBIfam" id="TIGR00021">
    <property type="entry name" value="rpiA"/>
    <property type="match status" value="1"/>
</dbReference>
<dbReference type="PANTHER" id="PTHR43748">
    <property type="entry name" value="RIBOSE-5-PHOSPHATE ISOMERASE 3, CHLOROPLASTIC-RELATED"/>
    <property type="match status" value="1"/>
</dbReference>
<dbReference type="PANTHER" id="PTHR43748:SF3">
    <property type="entry name" value="RIBOSE-5-PHOSPHATE ISOMERASE 3, CHLOROPLASTIC-RELATED"/>
    <property type="match status" value="1"/>
</dbReference>
<dbReference type="Pfam" id="PF06026">
    <property type="entry name" value="Rib_5-P_isom_A"/>
    <property type="match status" value="1"/>
</dbReference>
<dbReference type="SUPFAM" id="SSF75445">
    <property type="entry name" value="D-ribose-5-phosphate isomerase (RpiA), lid domain"/>
    <property type="match status" value="1"/>
</dbReference>
<dbReference type="SUPFAM" id="SSF100950">
    <property type="entry name" value="NagB/RpiA/CoA transferase-like"/>
    <property type="match status" value="1"/>
</dbReference>
<protein>
    <recommendedName>
        <fullName evidence="1">Ribose-5-phosphate isomerase A</fullName>
        <ecNumber evidence="1">5.3.1.6</ecNumber>
    </recommendedName>
    <alternativeName>
        <fullName evidence="1">Phosphoriboisomerase A</fullName>
        <shortName evidence="1">PRI</shortName>
    </alternativeName>
</protein>
<comment type="function">
    <text evidence="1">Catalyzes the reversible conversion of ribose-5-phosphate to ribulose 5-phosphate.</text>
</comment>
<comment type="catalytic activity">
    <reaction evidence="1">
        <text>aldehydo-D-ribose 5-phosphate = D-ribulose 5-phosphate</text>
        <dbReference type="Rhea" id="RHEA:14657"/>
        <dbReference type="ChEBI" id="CHEBI:58121"/>
        <dbReference type="ChEBI" id="CHEBI:58273"/>
        <dbReference type="EC" id="5.3.1.6"/>
    </reaction>
</comment>
<comment type="pathway">
    <text evidence="1">Carbohydrate degradation; pentose phosphate pathway; D-ribose 5-phosphate from D-ribulose 5-phosphate (non-oxidative stage): step 1/1.</text>
</comment>
<comment type="subunit">
    <text evidence="1">Homodimer.</text>
</comment>
<comment type="similarity">
    <text evidence="1">Belongs to the ribose 5-phosphate isomerase family.</text>
</comment>
<comment type="sequence caution" evidence="2">
    <conflict type="erroneous initiation">
        <sequence resource="EMBL-CDS" id="AAK99535"/>
    </conflict>
</comment>
<sequence>MENLKKMAGIKAAEFVSDGMVVGLGTGSTAYYFVEEIGRRIKEEGLQITAVTTSSVTTKQAEGLNIPLKSIDQVDFVDVTVDGADEVDSQFNGIKGGGGALLMEKVVATPSKEYIWVVDESKLVEKLGAFKLPVEVVQYGAEQVFRHFERAGYKPSFREKDGQRFVTDMQNFIIDLALDVIENPIAFGQELDHVVGVVEHGLFNQMVDKVIVAGRDGVQISTSKKGK</sequence>
<organism>
    <name type="scientific">Streptococcus pneumoniae (strain ATCC BAA-255 / R6)</name>
    <dbReference type="NCBI Taxonomy" id="171101"/>
    <lineage>
        <taxon>Bacteria</taxon>
        <taxon>Bacillati</taxon>
        <taxon>Bacillota</taxon>
        <taxon>Bacilli</taxon>
        <taxon>Lactobacillales</taxon>
        <taxon>Streptococcaceae</taxon>
        <taxon>Streptococcus</taxon>
    </lineage>
</organism>